<feature type="chain" id="PRO_1000057094" description="Dihydroxy-acid dehydratase">
    <location>
        <begin position="1"/>
        <end position="562"/>
    </location>
</feature>
<feature type="active site" description="Proton acceptor" evidence="1">
    <location>
        <position position="475"/>
    </location>
</feature>
<feature type="binding site" evidence="1">
    <location>
        <position position="78"/>
    </location>
    <ligand>
        <name>Mg(2+)</name>
        <dbReference type="ChEBI" id="CHEBI:18420"/>
    </ligand>
</feature>
<feature type="binding site" evidence="1">
    <location>
        <position position="119"/>
    </location>
    <ligand>
        <name>[2Fe-2S] cluster</name>
        <dbReference type="ChEBI" id="CHEBI:190135"/>
    </ligand>
</feature>
<feature type="binding site" evidence="1">
    <location>
        <position position="120"/>
    </location>
    <ligand>
        <name>Mg(2+)</name>
        <dbReference type="ChEBI" id="CHEBI:18420"/>
    </ligand>
</feature>
<feature type="binding site" description="via carbamate group" evidence="1">
    <location>
        <position position="121"/>
    </location>
    <ligand>
        <name>Mg(2+)</name>
        <dbReference type="ChEBI" id="CHEBI:18420"/>
    </ligand>
</feature>
<feature type="binding site" evidence="1">
    <location>
        <position position="192"/>
    </location>
    <ligand>
        <name>[2Fe-2S] cluster</name>
        <dbReference type="ChEBI" id="CHEBI:190135"/>
    </ligand>
</feature>
<feature type="binding site" evidence="1">
    <location>
        <position position="449"/>
    </location>
    <ligand>
        <name>Mg(2+)</name>
        <dbReference type="ChEBI" id="CHEBI:18420"/>
    </ligand>
</feature>
<feature type="modified residue" description="N6-carboxylysine" evidence="1">
    <location>
        <position position="121"/>
    </location>
</feature>
<sequence>MRSDEVKKGFDRTPHRSLLRATGLKDEDFDKPFIGVANSFIELIPGHFFLDKVSAIIKEEIRANGCVPFEFNTIGVDDGIAMGHDGMLFSLPSRELIANSIETVMNAHKLDAMIAIPNCDKIVPGMIMGALRVNVPTIFVSGGPMQKGYTKDGTPIDLATAFEAVGKFEAGDISEEQLKDIECNACPSGGSCSGMFTANSMNTLMEAMGIALPGNGTILALTPQREVLYRQAARRICEIAKDKASREKYKLKNILNENAVKNAFAVDMAMGGSSNTVLHMLAISKEAGVNFELKDINAISKRVSHIAKISPSLSTVHMEDINKAGGVNAVMKEMTKRGNDILADNLTISGETVLEKIKDAYIKDTNIIHTIDNPYSQVGGLAILYGNLAEQGAVIKTAGITGSRVFTGTAVCFDGQPEAIKGIVSGKVKAGNVVVIRYEGPKGGPGMQEMLAPTSLIMGMGLGSSVALITDGRFSGATRGASIGHVSPEAAEGGMIGLLKDGDEIHIDVDQYILSVNLSDEEIAKRKADFKPLKKPLNSSWLGQYRALVTNASSGAVLKTDL</sequence>
<name>ILVD_ALIB4</name>
<evidence type="ECO:0000255" key="1">
    <source>
        <dbReference type="HAMAP-Rule" id="MF_00012"/>
    </source>
</evidence>
<reference key="1">
    <citation type="journal article" date="2007" name="PLoS ONE">
        <title>The complete genome sequence and analysis of the Epsilonproteobacterium Arcobacter butzleri.</title>
        <authorList>
            <person name="Miller W.G."/>
            <person name="Parker C.T."/>
            <person name="Rubenfield M."/>
            <person name="Mendz G.L."/>
            <person name="Woesten M.M.S.M."/>
            <person name="Ussery D.W."/>
            <person name="Stolz J.F."/>
            <person name="Binnewies T.T."/>
            <person name="Hallin P.F."/>
            <person name="Wang G."/>
            <person name="Malek J.A."/>
            <person name="Rogosin A."/>
            <person name="Stanker L.H."/>
            <person name="Mandrell R.E."/>
        </authorList>
    </citation>
    <scope>NUCLEOTIDE SEQUENCE [LARGE SCALE GENOMIC DNA]</scope>
    <source>
        <strain>RM4018</strain>
    </source>
</reference>
<gene>
    <name evidence="1" type="primary">ilvD</name>
    <name type="ordered locus">Abu_2100</name>
</gene>
<protein>
    <recommendedName>
        <fullName evidence="1">Dihydroxy-acid dehydratase</fullName>
        <shortName evidence="1">DAD</shortName>
        <ecNumber evidence="1">4.2.1.9</ecNumber>
    </recommendedName>
</protein>
<proteinExistence type="inferred from homology"/>
<keyword id="KW-0001">2Fe-2S</keyword>
<keyword id="KW-0028">Amino-acid biosynthesis</keyword>
<keyword id="KW-0100">Branched-chain amino acid biosynthesis</keyword>
<keyword id="KW-0408">Iron</keyword>
<keyword id="KW-0411">Iron-sulfur</keyword>
<keyword id="KW-0456">Lyase</keyword>
<keyword id="KW-0460">Magnesium</keyword>
<keyword id="KW-0479">Metal-binding</keyword>
<keyword id="KW-1185">Reference proteome</keyword>
<organism>
    <name type="scientific">Aliarcobacter butzleri (strain RM4018)</name>
    <name type="common">Arcobacter butzleri</name>
    <dbReference type="NCBI Taxonomy" id="367737"/>
    <lineage>
        <taxon>Bacteria</taxon>
        <taxon>Pseudomonadati</taxon>
        <taxon>Campylobacterota</taxon>
        <taxon>Epsilonproteobacteria</taxon>
        <taxon>Campylobacterales</taxon>
        <taxon>Arcobacteraceae</taxon>
        <taxon>Aliarcobacter</taxon>
    </lineage>
</organism>
<dbReference type="EC" id="4.2.1.9" evidence="1"/>
<dbReference type="EMBL" id="CP000361">
    <property type="protein sequence ID" value="ABV68317.1"/>
    <property type="molecule type" value="Genomic_DNA"/>
</dbReference>
<dbReference type="RefSeq" id="WP_012147972.1">
    <property type="nucleotide sequence ID" value="NC_009850.1"/>
</dbReference>
<dbReference type="SMR" id="A8EWJ4"/>
<dbReference type="STRING" id="367737.Abu_2100"/>
<dbReference type="GeneID" id="24303453"/>
<dbReference type="KEGG" id="abu:Abu_2100"/>
<dbReference type="eggNOG" id="COG0129">
    <property type="taxonomic scope" value="Bacteria"/>
</dbReference>
<dbReference type="HOGENOM" id="CLU_014271_4_2_7"/>
<dbReference type="UniPathway" id="UPA00047">
    <property type="reaction ID" value="UER00057"/>
</dbReference>
<dbReference type="UniPathway" id="UPA00049">
    <property type="reaction ID" value="UER00061"/>
</dbReference>
<dbReference type="Proteomes" id="UP000001136">
    <property type="component" value="Chromosome"/>
</dbReference>
<dbReference type="GO" id="GO:0005829">
    <property type="term" value="C:cytosol"/>
    <property type="evidence" value="ECO:0007669"/>
    <property type="project" value="TreeGrafter"/>
</dbReference>
<dbReference type="GO" id="GO:0051537">
    <property type="term" value="F:2 iron, 2 sulfur cluster binding"/>
    <property type="evidence" value="ECO:0007669"/>
    <property type="project" value="UniProtKB-UniRule"/>
</dbReference>
<dbReference type="GO" id="GO:0004160">
    <property type="term" value="F:dihydroxy-acid dehydratase activity"/>
    <property type="evidence" value="ECO:0007669"/>
    <property type="project" value="UniProtKB-UniRule"/>
</dbReference>
<dbReference type="GO" id="GO:0000287">
    <property type="term" value="F:magnesium ion binding"/>
    <property type="evidence" value="ECO:0007669"/>
    <property type="project" value="UniProtKB-UniRule"/>
</dbReference>
<dbReference type="GO" id="GO:0009097">
    <property type="term" value="P:isoleucine biosynthetic process"/>
    <property type="evidence" value="ECO:0007669"/>
    <property type="project" value="UniProtKB-UniRule"/>
</dbReference>
<dbReference type="GO" id="GO:0009099">
    <property type="term" value="P:L-valine biosynthetic process"/>
    <property type="evidence" value="ECO:0007669"/>
    <property type="project" value="UniProtKB-UniRule"/>
</dbReference>
<dbReference type="FunFam" id="3.50.30.80:FF:000001">
    <property type="entry name" value="Dihydroxy-acid dehydratase"/>
    <property type="match status" value="1"/>
</dbReference>
<dbReference type="Gene3D" id="3.50.30.80">
    <property type="entry name" value="IlvD/EDD C-terminal domain-like"/>
    <property type="match status" value="1"/>
</dbReference>
<dbReference type="HAMAP" id="MF_00012">
    <property type="entry name" value="IlvD"/>
    <property type="match status" value="1"/>
</dbReference>
<dbReference type="InterPro" id="IPR042096">
    <property type="entry name" value="Dihydro-acid_dehy_C"/>
</dbReference>
<dbReference type="InterPro" id="IPR004404">
    <property type="entry name" value="DihydroxyA_deHydtase"/>
</dbReference>
<dbReference type="InterPro" id="IPR020558">
    <property type="entry name" value="DiOHA_6PGluconate_deHydtase_CS"/>
</dbReference>
<dbReference type="InterPro" id="IPR056740">
    <property type="entry name" value="ILV_EDD_C"/>
</dbReference>
<dbReference type="InterPro" id="IPR000581">
    <property type="entry name" value="ILV_EDD_N"/>
</dbReference>
<dbReference type="InterPro" id="IPR037237">
    <property type="entry name" value="IlvD/EDD_N"/>
</dbReference>
<dbReference type="NCBIfam" id="TIGR00110">
    <property type="entry name" value="ilvD"/>
    <property type="match status" value="1"/>
</dbReference>
<dbReference type="NCBIfam" id="NF002068">
    <property type="entry name" value="PRK00911.1"/>
    <property type="match status" value="1"/>
</dbReference>
<dbReference type="PANTHER" id="PTHR43661">
    <property type="entry name" value="D-XYLONATE DEHYDRATASE"/>
    <property type="match status" value="1"/>
</dbReference>
<dbReference type="PANTHER" id="PTHR43661:SF3">
    <property type="entry name" value="D-XYLONATE DEHYDRATASE YAGF-RELATED"/>
    <property type="match status" value="1"/>
</dbReference>
<dbReference type="Pfam" id="PF24877">
    <property type="entry name" value="ILV_EDD_C"/>
    <property type="match status" value="1"/>
</dbReference>
<dbReference type="Pfam" id="PF00920">
    <property type="entry name" value="ILVD_EDD_N"/>
    <property type="match status" value="1"/>
</dbReference>
<dbReference type="SUPFAM" id="SSF143975">
    <property type="entry name" value="IlvD/EDD N-terminal domain-like"/>
    <property type="match status" value="1"/>
</dbReference>
<dbReference type="SUPFAM" id="SSF52016">
    <property type="entry name" value="LeuD/IlvD-like"/>
    <property type="match status" value="1"/>
</dbReference>
<dbReference type="PROSITE" id="PS00886">
    <property type="entry name" value="ILVD_EDD_1"/>
    <property type="match status" value="1"/>
</dbReference>
<dbReference type="PROSITE" id="PS00887">
    <property type="entry name" value="ILVD_EDD_2"/>
    <property type="match status" value="1"/>
</dbReference>
<accession>A8EWJ4</accession>
<comment type="function">
    <text evidence="1">Functions in the biosynthesis of branched-chain amino acids. Catalyzes the dehydration of (2R,3R)-2,3-dihydroxy-3-methylpentanoate (2,3-dihydroxy-3-methylvalerate) into 2-oxo-3-methylpentanoate (2-oxo-3-methylvalerate) and of (2R)-2,3-dihydroxy-3-methylbutanoate (2,3-dihydroxyisovalerate) into 2-oxo-3-methylbutanoate (2-oxoisovalerate), the penultimate precursor to L-isoleucine and L-valine, respectively.</text>
</comment>
<comment type="catalytic activity">
    <reaction evidence="1">
        <text>(2R)-2,3-dihydroxy-3-methylbutanoate = 3-methyl-2-oxobutanoate + H2O</text>
        <dbReference type="Rhea" id="RHEA:24809"/>
        <dbReference type="ChEBI" id="CHEBI:11851"/>
        <dbReference type="ChEBI" id="CHEBI:15377"/>
        <dbReference type="ChEBI" id="CHEBI:49072"/>
        <dbReference type="EC" id="4.2.1.9"/>
    </reaction>
    <physiologicalReaction direction="left-to-right" evidence="1">
        <dbReference type="Rhea" id="RHEA:24810"/>
    </physiologicalReaction>
</comment>
<comment type="catalytic activity">
    <reaction evidence="1">
        <text>(2R,3R)-2,3-dihydroxy-3-methylpentanoate = (S)-3-methyl-2-oxopentanoate + H2O</text>
        <dbReference type="Rhea" id="RHEA:27694"/>
        <dbReference type="ChEBI" id="CHEBI:15377"/>
        <dbReference type="ChEBI" id="CHEBI:35146"/>
        <dbReference type="ChEBI" id="CHEBI:49258"/>
        <dbReference type="EC" id="4.2.1.9"/>
    </reaction>
    <physiologicalReaction direction="left-to-right" evidence="1">
        <dbReference type="Rhea" id="RHEA:27695"/>
    </physiologicalReaction>
</comment>
<comment type="cofactor">
    <cofactor evidence="1">
        <name>[2Fe-2S] cluster</name>
        <dbReference type="ChEBI" id="CHEBI:190135"/>
    </cofactor>
    <text evidence="1">Binds 1 [2Fe-2S] cluster per subunit. This cluster acts as a Lewis acid cofactor.</text>
</comment>
<comment type="cofactor">
    <cofactor evidence="1">
        <name>Mg(2+)</name>
        <dbReference type="ChEBI" id="CHEBI:18420"/>
    </cofactor>
</comment>
<comment type="pathway">
    <text evidence="1">Amino-acid biosynthesis; L-isoleucine biosynthesis; L-isoleucine from 2-oxobutanoate: step 3/4.</text>
</comment>
<comment type="pathway">
    <text evidence="1">Amino-acid biosynthesis; L-valine biosynthesis; L-valine from pyruvate: step 3/4.</text>
</comment>
<comment type="subunit">
    <text evidence="1">Homodimer.</text>
</comment>
<comment type="similarity">
    <text evidence="1">Belongs to the IlvD/Edd family.</text>
</comment>